<accession>Q51506</accession>
<protein>
    <recommendedName>
        <fullName>Redox-sensitive transcriptional activator SoxR</fullName>
    </recommendedName>
</protein>
<dbReference type="EMBL" id="X95517">
    <property type="protein sequence ID" value="CAA64771.1"/>
    <property type="molecule type" value="Genomic_DNA"/>
</dbReference>
<dbReference type="EMBL" id="AE004091">
    <property type="protein sequence ID" value="AAG05661.1"/>
    <property type="molecule type" value="Genomic_DNA"/>
</dbReference>
<dbReference type="PIR" id="B83361">
    <property type="entry name" value="B83361"/>
</dbReference>
<dbReference type="RefSeq" id="NP_250963.1">
    <property type="nucleotide sequence ID" value="NC_002516.2"/>
</dbReference>
<dbReference type="RefSeq" id="WP_003089301.1">
    <property type="nucleotide sequence ID" value="NZ_QZGE01000014.1"/>
</dbReference>
<dbReference type="SMR" id="Q51506"/>
<dbReference type="FunCoup" id="Q51506">
    <property type="interactions" value="80"/>
</dbReference>
<dbReference type="STRING" id="208964.PA2273"/>
<dbReference type="PaxDb" id="208964-PA2273"/>
<dbReference type="GeneID" id="882298"/>
<dbReference type="KEGG" id="pae:PA2273"/>
<dbReference type="PATRIC" id="fig|208964.12.peg.2375"/>
<dbReference type="PseudoCAP" id="PA2273"/>
<dbReference type="HOGENOM" id="CLU_060077_5_1_6"/>
<dbReference type="InParanoid" id="Q51506"/>
<dbReference type="OrthoDB" id="9802944at2"/>
<dbReference type="PhylomeDB" id="Q51506"/>
<dbReference type="BioCyc" id="PAER208964:G1FZ6-2312-MONOMER"/>
<dbReference type="Proteomes" id="UP000002438">
    <property type="component" value="Chromosome"/>
</dbReference>
<dbReference type="GO" id="GO:0051537">
    <property type="term" value="F:2 iron, 2 sulfur cluster binding"/>
    <property type="evidence" value="ECO:0007669"/>
    <property type="project" value="UniProtKB-KW"/>
</dbReference>
<dbReference type="GO" id="GO:0003677">
    <property type="term" value="F:DNA binding"/>
    <property type="evidence" value="ECO:0007669"/>
    <property type="project" value="UniProtKB-KW"/>
</dbReference>
<dbReference type="GO" id="GO:0003700">
    <property type="term" value="F:DNA-binding transcription factor activity"/>
    <property type="evidence" value="ECO:0000318"/>
    <property type="project" value="GO_Central"/>
</dbReference>
<dbReference type="GO" id="GO:0046872">
    <property type="term" value="F:metal ion binding"/>
    <property type="evidence" value="ECO:0007669"/>
    <property type="project" value="UniProtKB-KW"/>
</dbReference>
<dbReference type="GO" id="GO:0006355">
    <property type="term" value="P:regulation of DNA-templated transcription"/>
    <property type="evidence" value="ECO:0000318"/>
    <property type="project" value="GO_Central"/>
</dbReference>
<dbReference type="GO" id="GO:0006979">
    <property type="term" value="P:response to oxidative stress"/>
    <property type="evidence" value="ECO:0007669"/>
    <property type="project" value="InterPro"/>
</dbReference>
<dbReference type="CDD" id="cd01110">
    <property type="entry name" value="HTH_SoxR"/>
    <property type="match status" value="1"/>
</dbReference>
<dbReference type="Gene3D" id="1.10.1660.10">
    <property type="match status" value="1"/>
</dbReference>
<dbReference type="InterPro" id="IPR009061">
    <property type="entry name" value="DNA-bd_dom_put_sf"/>
</dbReference>
<dbReference type="InterPro" id="IPR000551">
    <property type="entry name" value="MerR-type_HTH_dom"/>
</dbReference>
<dbReference type="InterPro" id="IPR047057">
    <property type="entry name" value="MerR_fam"/>
</dbReference>
<dbReference type="InterPro" id="IPR010211">
    <property type="entry name" value="Redox-sen_tscrpt-act_SoxR"/>
</dbReference>
<dbReference type="InterPro" id="IPR015358">
    <property type="entry name" value="Tscrpt_reg_MerR_DNA-bd"/>
</dbReference>
<dbReference type="NCBIfam" id="TIGR01950">
    <property type="entry name" value="SoxR"/>
    <property type="match status" value="1"/>
</dbReference>
<dbReference type="PANTHER" id="PTHR30204">
    <property type="entry name" value="REDOX-CYCLING DRUG-SENSING TRANSCRIPTIONAL ACTIVATOR SOXR"/>
    <property type="match status" value="1"/>
</dbReference>
<dbReference type="PANTHER" id="PTHR30204:SF0">
    <property type="entry name" value="REDOX-SENSITIVE TRANSCRIPTIONAL ACTIVATOR SOXR"/>
    <property type="match status" value="1"/>
</dbReference>
<dbReference type="Pfam" id="PF00376">
    <property type="entry name" value="MerR"/>
    <property type="match status" value="1"/>
</dbReference>
<dbReference type="Pfam" id="PF09278">
    <property type="entry name" value="MerR-DNA-bind"/>
    <property type="match status" value="1"/>
</dbReference>
<dbReference type="PRINTS" id="PR00040">
    <property type="entry name" value="HTHMERR"/>
</dbReference>
<dbReference type="SMART" id="SM00422">
    <property type="entry name" value="HTH_MERR"/>
    <property type="match status" value="1"/>
</dbReference>
<dbReference type="SUPFAM" id="SSF46955">
    <property type="entry name" value="Putative DNA-binding domain"/>
    <property type="match status" value="1"/>
</dbReference>
<dbReference type="PROSITE" id="PS00552">
    <property type="entry name" value="HTH_MERR_1"/>
    <property type="match status" value="1"/>
</dbReference>
<dbReference type="PROSITE" id="PS50937">
    <property type="entry name" value="HTH_MERR_2"/>
    <property type="match status" value="1"/>
</dbReference>
<sequence>MKNSCASRELSVGELARRAGVAVSALHFYETKGLISSQRNAGNQRRFSRETLRRVVVIKVAQRVGIPLAEIARALQTLPAGRSPSAADWARLSAQWKEDLTERIDKLLLLRDQLDGCIGCGCLSLQACPLRNPGDQLSAEGPGAHWLDAEGREHDG</sequence>
<organism>
    <name type="scientific">Pseudomonas aeruginosa (strain ATCC 15692 / DSM 22644 / CIP 104116 / JCM 14847 / LMG 12228 / 1C / PRS 101 / PAO1)</name>
    <dbReference type="NCBI Taxonomy" id="208964"/>
    <lineage>
        <taxon>Bacteria</taxon>
        <taxon>Pseudomonadati</taxon>
        <taxon>Pseudomonadota</taxon>
        <taxon>Gammaproteobacteria</taxon>
        <taxon>Pseudomonadales</taxon>
        <taxon>Pseudomonadaceae</taxon>
        <taxon>Pseudomonas</taxon>
    </lineage>
</organism>
<evidence type="ECO:0000250" key="1"/>
<evidence type="ECO:0000255" key="2">
    <source>
        <dbReference type="PROSITE-ProRule" id="PRU00254"/>
    </source>
</evidence>
<proteinExistence type="inferred from homology"/>
<name>SOXR_PSEAE</name>
<gene>
    <name type="primary">soxR</name>
    <name type="ordered locus">PA2273</name>
</gene>
<comment type="function">
    <text evidence="1">Activates the transcription of the soxS gene which itself controls the superoxide response regulon. SoxR contains a 2Fe-2S iron-sulfur cluster that may act as a redox sensor system that recognizes superoxide. The variable redox state of the Fe-S cluster is employed in vivo to modulate the transcriptional activity of SoxR in response to specific types of oxidative stress (By similarity).</text>
</comment>
<comment type="subunit">
    <text evidence="1">Homodimer.</text>
</comment>
<keyword id="KW-0001">2Fe-2S</keyword>
<keyword id="KW-0010">Activator</keyword>
<keyword id="KW-0238">DNA-binding</keyword>
<keyword id="KW-0408">Iron</keyword>
<keyword id="KW-0411">Iron-sulfur</keyword>
<keyword id="KW-0479">Metal-binding</keyword>
<keyword id="KW-1185">Reference proteome</keyword>
<keyword id="KW-0804">Transcription</keyword>
<keyword id="KW-0805">Transcription regulation</keyword>
<reference key="1">
    <citation type="journal article" date="1997" name="J. Bacteriol.">
        <title>Identification of a penicillin-binding protein 3 homolog, PBP3x, in Pseudomonas aeruginosa: gene cloning and growth phase-dependent expression.</title>
        <authorList>
            <person name="Liao X."/>
            <person name="Hancock R.E.W."/>
        </authorList>
    </citation>
    <scope>NUCLEOTIDE SEQUENCE [GENOMIC DNA]</scope>
    <source>
        <strain>ATCC 15692 / DSM 22644 / CIP 104116 / JCM 14847 / LMG 12228 / 1C / PRS 101 / PAO1</strain>
    </source>
</reference>
<reference key="2">
    <citation type="journal article" date="2000" name="Nature">
        <title>Complete genome sequence of Pseudomonas aeruginosa PAO1, an opportunistic pathogen.</title>
        <authorList>
            <person name="Stover C.K."/>
            <person name="Pham X.-Q.T."/>
            <person name="Erwin A.L."/>
            <person name="Mizoguchi S.D."/>
            <person name="Warrener P."/>
            <person name="Hickey M.J."/>
            <person name="Brinkman F.S.L."/>
            <person name="Hufnagle W.O."/>
            <person name="Kowalik D.J."/>
            <person name="Lagrou M."/>
            <person name="Garber R.L."/>
            <person name="Goltry L."/>
            <person name="Tolentino E."/>
            <person name="Westbrock-Wadman S."/>
            <person name="Yuan Y."/>
            <person name="Brody L.L."/>
            <person name="Coulter S.N."/>
            <person name="Folger K.R."/>
            <person name="Kas A."/>
            <person name="Larbig K."/>
            <person name="Lim R.M."/>
            <person name="Smith K.A."/>
            <person name="Spencer D.H."/>
            <person name="Wong G.K.-S."/>
            <person name="Wu Z."/>
            <person name="Paulsen I.T."/>
            <person name="Reizer J."/>
            <person name="Saier M.H. Jr."/>
            <person name="Hancock R.E.W."/>
            <person name="Lory S."/>
            <person name="Olson M.V."/>
        </authorList>
    </citation>
    <scope>NUCLEOTIDE SEQUENCE [LARGE SCALE GENOMIC DNA]</scope>
    <source>
        <strain>ATCC 15692 / DSM 22644 / CIP 104116 / JCM 14847 / LMG 12228 / 1C / PRS 101 / PAO1</strain>
    </source>
</reference>
<feature type="chain" id="PRO_0000098155" description="Redox-sensitive transcriptional activator SoxR">
    <location>
        <begin position="1"/>
        <end position="156"/>
    </location>
</feature>
<feature type="domain" description="HTH merR-type" evidence="2">
    <location>
        <begin position="9"/>
        <end position="77"/>
    </location>
</feature>
<feature type="DNA-binding region" description="H-T-H motif" evidence="2">
    <location>
        <begin position="12"/>
        <end position="31"/>
    </location>
</feature>
<feature type="region of interest" description="Might be part of a sensor region">
    <location>
        <begin position="117"/>
        <end position="128"/>
    </location>
</feature>
<feature type="binding site" evidence="1">
    <location>
        <position position="117"/>
    </location>
    <ligand>
        <name>[2Fe-2S] cluster</name>
        <dbReference type="ChEBI" id="CHEBI:190135"/>
    </ligand>
</feature>
<feature type="binding site" evidence="1">
    <location>
        <position position="120"/>
    </location>
    <ligand>
        <name>[2Fe-2S] cluster</name>
        <dbReference type="ChEBI" id="CHEBI:190135"/>
    </ligand>
</feature>
<feature type="binding site" evidence="1">
    <location>
        <position position="122"/>
    </location>
    <ligand>
        <name>[2Fe-2S] cluster</name>
        <dbReference type="ChEBI" id="CHEBI:190135"/>
    </ligand>
</feature>
<feature type="binding site" evidence="1">
    <location>
        <position position="128"/>
    </location>
    <ligand>
        <name>[2Fe-2S] cluster</name>
        <dbReference type="ChEBI" id="CHEBI:190135"/>
    </ligand>
</feature>